<protein>
    <recommendedName>
        <fullName>LON peptidase N-terminal domain and RING finger protein 3</fullName>
    </recommendedName>
    <alternativeName>
        <fullName>RING finger protein 127</fullName>
    </alternativeName>
</protein>
<dbReference type="EMBL" id="AK016522">
    <property type="protein sequence ID" value="BAB30284.1"/>
    <property type="molecule type" value="mRNA"/>
</dbReference>
<dbReference type="EMBL" id="AL450395">
    <property type="status" value="NOT_ANNOTATED_CDS"/>
    <property type="molecule type" value="Genomic_DNA"/>
</dbReference>
<dbReference type="EMBL" id="BC120688">
    <property type="protein sequence ID" value="AAI20689.1"/>
    <property type="molecule type" value="mRNA"/>
</dbReference>
<dbReference type="EMBL" id="BC120690">
    <property type="protein sequence ID" value="AAI20691.1"/>
    <property type="molecule type" value="mRNA"/>
</dbReference>
<dbReference type="CCDS" id="CCDS30059.1"/>
<dbReference type="RefSeq" id="NP_083170.1">
    <property type="nucleotide sequence ID" value="NM_028894.1"/>
</dbReference>
<dbReference type="SMR" id="Q9D4H7"/>
<dbReference type="BioGRID" id="216694">
    <property type="interactions" value="3"/>
</dbReference>
<dbReference type="FunCoup" id="Q9D4H7">
    <property type="interactions" value="265"/>
</dbReference>
<dbReference type="STRING" id="10090.ENSMUSP00000016383"/>
<dbReference type="PhosphoSitePlus" id="Q9D4H7"/>
<dbReference type="SwissPalm" id="Q9D4H7"/>
<dbReference type="PaxDb" id="10090-ENSMUSP00000016383"/>
<dbReference type="ProteomicsDB" id="292350"/>
<dbReference type="Antibodypedia" id="29740">
    <property type="antibodies" value="136 antibodies from 21 providers"/>
</dbReference>
<dbReference type="DNASU" id="74365"/>
<dbReference type="Ensembl" id="ENSMUST00000016383.10">
    <property type="protein sequence ID" value="ENSMUSP00000016383.4"/>
    <property type="gene ID" value="ENSMUSG00000016239.12"/>
</dbReference>
<dbReference type="GeneID" id="74365"/>
<dbReference type="KEGG" id="mmu:74365"/>
<dbReference type="UCSC" id="uc009sxm.1">
    <property type="organism name" value="mouse"/>
</dbReference>
<dbReference type="AGR" id="MGI:1921615"/>
<dbReference type="CTD" id="79836"/>
<dbReference type="MGI" id="MGI:1921615">
    <property type="gene designation" value="Lonrf3"/>
</dbReference>
<dbReference type="VEuPathDB" id="HostDB:ENSMUSG00000016239"/>
<dbReference type="eggNOG" id="KOG1124">
    <property type="taxonomic scope" value="Eukaryota"/>
</dbReference>
<dbReference type="eggNOG" id="KOG4159">
    <property type="taxonomic scope" value="Eukaryota"/>
</dbReference>
<dbReference type="GeneTree" id="ENSGT00440000033329"/>
<dbReference type="HOGENOM" id="CLU_013989_1_2_1"/>
<dbReference type="InParanoid" id="Q9D4H7"/>
<dbReference type="OMA" id="RLMPHWS"/>
<dbReference type="PhylomeDB" id="Q9D4H7"/>
<dbReference type="TreeFam" id="TF327043"/>
<dbReference type="BioGRID-ORCS" id="74365">
    <property type="hits" value="3 hits in 77 CRISPR screens"/>
</dbReference>
<dbReference type="ChiTaRS" id="Lonrf3">
    <property type="organism name" value="mouse"/>
</dbReference>
<dbReference type="PRO" id="PR:Q9D4H7"/>
<dbReference type="Proteomes" id="UP000000589">
    <property type="component" value="Chromosome X"/>
</dbReference>
<dbReference type="RNAct" id="Q9D4H7">
    <property type="molecule type" value="protein"/>
</dbReference>
<dbReference type="Bgee" id="ENSMUSG00000016239">
    <property type="expression patterns" value="Expressed in cleaving embryo and 99 other cell types or tissues"/>
</dbReference>
<dbReference type="ExpressionAtlas" id="Q9D4H7">
    <property type="expression patterns" value="baseline and differential"/>
</dbReference>
<dbReference type="GO" id="GO:0005737">
    <property type="term" value="C:cytoplasm"/>
    <property type="evidence" value="ECO:0007669"/>
    <property type="project" value="UniProtKB-ARBA"/>
</dbReference>
<dbReference type="GO" id="GO:0008270">
    <property type="term" value="F:zinc ion binding"/>
    <property type="evidence" value="ECO:0007669"/>
    <property type="project" value="UniProtKB-KW"/>
</dbReference>
<dbReference type="CDD" id="cd16513">
    <property type="entry name" value="RING-HC_LONFs_rpt1"/>
    <property type="match status" value="1"/>
</dbReference>
<dbReference type="CDD" id="cd16514">
    <property type="entry name" value="RING-HC_LONFs_rpt2"/>
    <property type="match status" value="1"/>
</dbReference>
<dbReference type="Gene3D" id="2.30.130.40">
    <property type="entry name" value="LON domain-like"/>
    <property type="match status" value="1"/>
</dbReference>
<dbReference type="Gene3D" id="1.25.40.10">
    <property type="entry name" value="Tetratricopeptide repeat domain"/>
    <property type="match status" value="1"/>
</dbReference>
<dbReference type="Gene3D" id="3.30.40.10">
    <property type="entry name" value="Zinc/RING finger domain, C3HC4 (zinc finger)"/>
    <property type="match status" value="2"/>
</dbReference>
<dbReference type="InterPro" id="IPR003111">
    <property type="entry name" value="Lon_prtase_N"/>
</dbReference>
<dbReference type="InterPro" id="IPR046336">
    <property type="entry name" value="Lon_prtase_N_sf"/>
</dbReference>
<dbReference type="InterPro" id="IPR015947">
    <property type="entry name" value="PUA-like_sf"/>
</dbReference>
<dbReference type="InterPro" id="IPR011990">
    <property type="entry name" value="TPR-like_helical_dom_sf"/>
</dbReference>
<dbReference type="InterPro" id="IPR019734">
    <property type="entry name" value="TPR_rpt"/>
</dbReference>
<dbReference type="InterPro" id="IPR018957">
    <property type="entry name" value="Znf_C3HC4_RING-type"/>
</dbReference>
<dbReference type="InterPro" id="IPR001841">
    <property type="entry name" value="Znf_RING"/>
</dbReference>
<dbReference type="InterPro" id="IPR013083">
    <property type="entry name" value="Znf_RING/FYVE/PHD"/>
</dbReference>
<dbReference type="InterPro" id="IPR017907">
    <property type="entry name" value="Znf_RING_CS"/>
</dbReference>
<dbReference type="PANTHER" id="PTHR23327:SF41">
    <property type="entry name" value="LON PEPTIDASE N-TERMINAL DOMAIN AND RING FINGER PROTEIN 3"/>
    <property type="match status" value="1"/>
</dbReference>
<dbReference type="PANTHER" id="PTHR23327">
    <property type="entry name" value="RING FINGER PROTEIN 127"/>
    <property type="match status" value="1"/>
</dbReference>
<dbReference type="Pfam" id="PF02190">
    <property type="entry name" value="LON_substr_bdg"/>
    <property type="match status" value="1"/>
</dbReference>
<dbReference type="Pfam" id="PF00097">
    <property type="entry name" value="zf-C3HC4"/>
    <property type="match status" value="1"/>
</dbReference>
<dbReference type="Pfam" id="PF13923">
    <property type="entry name" value="zf-C3HC4_2"/>
    <property type="match status" value="1"/>
</dbReference>
<dbReference type="SMART" id="SM00464">
    <property type="entry name" value="LON"/>
    <property type="match status" value="1"/>
</dbReference>
<dbReference type="SMART" id="SM00184">
    <property type="entry name" value="RING"/>
    <property type="match status" value="2"/>
</dbReference>
<dbReference type="SMART" id="SM00028">
    <property type="entry name" value="TPR"/>
    <property type="match status" value="4"/>
</dbReference>
<dbReference type="SUPFAM" id="SSF88697">
    <property type="entry name" value="PUA domain-like"/>
    <property type="match status" value="1"/>
</dbReference>
<dbReference type="SUPFAM" id="SSF57850">
    <property type="entry name" value="RING/U-box"/>
    <property type="match status" value="2"/>
</dbReference>
<dbReference type="SUPFAM" id="SSF48452">
    <property type="entry name" value="TPR-like"/>
    <property type="match status" value="1"/>
</dbReference>
<dbReference type="PROSITE" id="PS51787">
    <property type="entry name" value="LON_N"/>
    <property type="match status" value="1"/>
</dbReference>
<dbReference type="PROSITE" id="PS50005">
    <property type="entry name" value="TPR"/>
    <property type="match status" value="3"/>
</dbReference>
<dbReference type="PROSITE" id="PS50293">
    <property type="entry name" value="TPR_REGION"/>
    <property type="match status" value="1"/>
</dbReference>
<dbReference type="PROSITE" id="PS00518">
    <property type="entry name" value="ZF_RING_1"/>
    <property type="match status" value="2"/>
</dbReference>
<dbReference type="PROSITE" id="PS50089">
    <property type="entry name" value="ZF_RING_2"/>
    <property type="match status" value="2"/>
</dbReference>
<organism>
    <name type="scientific">Mus musculus</name>
    <name type="common">Mouse</name>
    <dbReference type="NCBI Taxonomy" id="10090"/>
    <lineage>
        <taxon>Eukaryota</taxon>
        <taxon>Metazoa</taxon>
        <taxon>Chordata</taxon>
        <taxon>Craniata</taxon>
        <taxon>Vertebrata</taxon>
        <taxon>Euteleostomi</taxon>
        <taxon>Mammalia</taxon>
        <taxon>Eutheria</taxon>
        <taxon>Euarchontoglires</taxon>
        <taxon>Glires</taxon>
        <taxon>Rodentia</taxon>
        <taxon>Myomorpha</taxon>
        <taxon>Muroidea</taxon>
        <taxon>Muridae</taxon>
        <taxon>Murinae</taxon>
        <taxon>Mus</taxon>
        <taxon>Mus</taxon>
    </lineage>
</organism>
<name>LONF3_MOUSE</name>
<proteinExistence type="evidence at transcript level"/>
<gene>
    <name type="primary">Lonrf3</name>
    <name type="synonym">Rnf127</name>
</gene>
<reference key="1">
    <citation type="journal article" date="2005" name="Science">
        <title>The transcriptional landscape of the mammalian genome.</title>
        <authorList>
            <person name="Carninci P."/>
            <person name="Kasukawa T."/>
            <person name="Katayama S."/>
            <person name="Gough J."/>
            <person name="Frith M.C."/>
            <person name="Maeda N."/>
            <person name="Oyama R."/>
            <person name="Ravasi T."/>
            <person name="Lenhard B."/>
            <person name="Wells C."/>
            <person name="Kodzius R."/>
            <person name="Shimokawa K."/>
            <person name="Bajic V.B."/>
            <person name="Brenner S.E."/>
            <person name="Batalov S."/>
            <person name="Forrest A.R."/>
            <person name="Zavolan M."/>
            <person name="Davis M.J."/>
            <person name="Wilming L.G."/>
            <person name="Aidinis V."/>
            <person name="Allen J.E."/>
            <person name="Ambesi-Impiombato A."/>
            <person name="Apweiler R."/>
            <person name="Aturaliya R.N."/>
            <person name="Bailey T.L."/>
            <person name="Bansal M."/>
            <person name="Baxter L."/>
            <person name="Beisel K.W."/>
            <person name="Bersano T."/>
            <person name="Bono H."/>
            <person name="Chalk A.M."/>
            <person name="Chiu K.P."/>
            <person name="Choudhary V."/>
            <person name="Christoffels A."/>
            <person name="Clutterbuck D.R."/>
            <person name="Crowe M.L."/>
            <person name="Dalla E."/>
            <person name="Dalrymple B.P."/>
            <person name="de Bono B."/>
            <person name="Della Gatta G."/>
            <person name="di Bernardo D."/>
            <person name="Down T."/>
            <person name="Engstrom P."/>
            <person name="Fagiolini M."/>
            <person name="Faulkner G."/>
            <person name="Fletcher C.F."/>
            <person name="Fukushima T."/>
            <person name="Furuno M."/>
            <person name="Futaki S."/>
            <person name="Gariboldi M."/>
            <person name="Georgii-Hemming P."/>
            <person name="Gingeras T.R."/>
            <person name="Gojobori T."/>
            <person name="Green R.E."/>
            <person name="Gustincich S."/>
            <person name="Harbers M."/>
            <person name="Hayashi Y."/>
            <person name="Hensch T.K."/>
            <person name="Hirokawa N."/>
            <person name="Hill D."/>
            <person name="Huminiecki L."/>
            <person name="Iacono M."/>
            <person name="Ikeo K."/>
            <person name="Iwama A."/>
            <person name="Ishikawa T."/>
            <person name="Jakt M."/>
            <person name="Kanapin A."/>
            <person name="Katoh M."/>
            <person name="Kawasawa Y."/>
            <person name="Kelso J."/>
            <person name="Kitamura H."/>
            <person name="Kitano H."/>
            <person name="Kollias G."/>
            <person name="Krishnan S.P."/>
            <person name="Kruger A."/>
            <person name="Kummerfeld S.K."/>
            <person name="Kurochkin I.V."/>
            <person name="Lareau L.F."/>
            <person name="Lazarevic D."/>
            <person name="Lipovich L."/>
            <person name="Liu J."/>
            <person name="Liuni S."/>
            <person name="McWilliam S."/>
            <person name="Madan Babu M."/>
            <person name="Madera M."/>
            <person name="Marchionni L."/>
            <person name="Matsuda H."/>
            <person name="Matsuzawa S."/>
            <person name="Miki H."/>
            <person name="Mignone F."/>
            <person name="Miyake S."/>
            <person name="Morris K."/>
            <person name="Mottagui-Tabar S."/>
            <person name="Mulder N."/>
            <person name="Nakano N."/>
            <person name="Nakauchi H."/>
            <person name="Ng P."/>
            <person name="Nilsson R."/>
            <person name="Nishiguchi S."/>
            <person name="Nishikawa S."/>
            <person name="Nori F."/>
            <person name="Ohara O."/>
            <person name="Okazaki Y."/>
            <person name="Orlando V."/>
            <person name="Pang K.C."/>
            <person name="Pavan W.J."/>
            <person name="Pavesi G."/>
            <person name="Pesole G."/>
            <person name="Petrovsky N."/>
            <person name="Piazza S."/>
            <person name="Reed J."/>
            <person name="Reid J.F."/>
            <person name="Ring B.Z."/>
            <person name="Ringwald M."/>
            <person name="Rost B."/>
            <person name="Ruan Y."/>
            <person name="Salzberg S.L."/>
            <person name="Sandelin A."/>
            <person name="Schneider C."/>
            <person name="Schoenbach C."/>
            <person name="Sekiguchi K."/>
            <person name="Semple C.A."/>
            <person name="Seno S."/>
            <person name="Sessa L."/>
            <person name="Sheng Y."/>
            <person name="Shibata Y."/>
            <person name="Shimada H."/>
            <person name="Shimada K."/>
            <person name="Silva D."/>
            <person name="Sinclair B."/>
            <person name="Sperling S."/>
            <person name="Stupka E."/>
            <person name="Sugiura K."/>
            <person name="Sultana R."/>
            <person name="Takenaka Y."/>
            <person name="Taki K."/>
            <person name="Tammoja K."/>
            <person name="Tan S.L."/>
            <person name="Tang S."/>
            <person name="Taylor M.S."/>
            <person name="Tegner J."/>
            <person name="Teichmann S.A."/>
            <person name="Ueda H.R."/>
            <person name="van Nimwegen E."/>
            <person name="Verardo R."/>
            <person name="Wei C.L."/>
            <person name="Yagi K."/>
            <person name="Yamanishi H."/>
            <person name="Zabarovsky E."/>
            <person name="Zhu S."/>
            <person name="Zimmer A."/>
            <person name="Hide W."/>
            <person name="Bult C."/>
            <person name="Grimmond S.M."/>
            <person name="Teasdale R.D."/>
            <person name="Liu E.T."/>
            <person name="Brusic V."/>
            <person name="Quackenbush J."/>
            <person name="Wahlestedt C."/>
            <person name="Mattick J.S."/>
            <person name="Hume D.A."/>
            <person name="Kai C."/>
            <person name="Sasaki D."/>
            <person name="Tomaru Y."/>
            <person name="Fukuda S."/>
            <person name="Kanamori-Katayama M."/>
            <person name="Suzuki M."/>
            <person name="Aoki J."/>
            <person name="Arakawa T."/>
            <person name="Iida J."/>
            <person name="Imamura K."/>
            <person name="Itoh M."/>
            <person name="Kato T."/>
            <person name="Kawaji H."/>
            <person name="Kawagashira N."/>
            <person name="Kawashima T."/>
            <person name="Kojima M."/>
            <person name="Kondo S."/>
            <person name="Konno H."/>
            <person name="Nakano K."/>
            <person name="Ninomiya N."/>
            <person name="Nishio T."/>
            <person name="Okada M."/>
            <person name="Plessy C."/>
            <person name="Shibata K."/>
            <person name="Shiraki T."/>
            <person name="Suzuki S."/>
            <person name="Tagami M."/>
            <person name="Waki K."/>
            <person name="Watahiki A."/>
            <person name="Okamura-Oho Y."/>
            <person name="Suzuki H."/>
            <person name="Kawai J."/>
            <person name="Hayashizaki Y."/>
        </authorList>
    </citation>
    <scope>NUCLEOTIDE SEQUENCE [LARGE SCALE MRNA]</scope>
    <source>
        <strain>C57BL/6J</strain>
        <tissue>Testis</tissue>
    </source>
</reference>
<reference key="2">
    <citation type="journal article" date="2009" name="PLoS Biol.">
        <title>Lineage-specific biology revealed by a finished genome assembly of the mouse.</title>
        <authorList>
            <person name="Church D.M."/>
            <person name="Goodstadt L."/>
            <person name="Hillier L.W."/>
            <person name="Zody M.C."/>
            <person name="Goldstein S."/>
            <person name="She X."/>
            <person name="Bult C.J."/>
            <person name="Agarwala R."/>
            <person name="Cherry J.L."/>
            <person name="DiCuccio M."/>
            <person name="Hlavina W."/>
            <person name="Kapustin Y."/>
            <person name="Meric P."/>
            <person name="Maglott D."/>
            <person name="Birtle Z."/>
            <person name="Marques A.C."/>
            <person name="Graves T."/>
            <person name="Zhou S."/>
            <person name="Teague B."/>
            <person name="Potamousis K."/>
            <person name="Churas C."/>
            <person name="Place M."/>
            <person name="Herschleb J."/>
            <person name="Runnheim R."/>
            <person name="Forrest D."/>
            <person name="Amos-Landgraf J."/>
            <person name="Schwartz D.C."/>
            <person name="Cheng Z."/>
            <person name="Lindblad-Toh K."/>
            <person name="Eichler E.E."/>
            <person name="Ponting C.P."/>
        </authorList>
    </citation>
    <scope>NUCLEOTIDE SEQUENCE [LARGE SCALE GENOMIC DNA]</scope>
    <source>
        <strain>C57BL/6J</strain>
    </source>
</reference>
<reference key="3">
    <citation type="journal article" date="2004" name="Genome Res.">
        <title>The status, quality, and expansion of the NIH full-length cDNA project: the Mammalian Gene Collection (MGC).</title>
        <authorList>
            <consortium name="The MGC Project Team"/>
        </authorList>
    </citation>
    <scope>NUCLEOTIDE SEQUENCE [LARGE SCALE MRNA]</scope>
    <source>
        <tissue>Brain</tissue>
    </source>
</reference>
<keyword id="KW-0479">Metal-binding</keyword>
<keyword id="KW-1185">Reference proteome</keyword>
<keyword id="KW-0677">Repeat</keyword>
<keyword id="KW-0802">TPR repeat</keyword>
<keyword id="KW-0862">Zinc</keyword>
<keyword id="KW-0863">Zinc-finger</keyword>
<feature type="chain" id="PRO_0000277673" description="LON peptidase N-terminal domain and RING finger protein 3">
    <location>
        <begin position="1"/>
        <end position="753"/>
    </location>
</feature>
<feature type="repeat" description="TPR 1">
    <location>
        <begin position="72"/>
        <end position="105"/>
    </location>
</feature>
<feature type="repeat" description="TPR 2">
    <location>
        <begin position="244"/>
        <end position="277"/>
    </location>
</feature>
<feature type="repeat" description="TPR 3">
    <location>
        <begin position="279"/>
        <end position="311"/>
    </location>
</feature>
<feature type="repeat" description="TPR 4">
    <location>
        <begin position="313"/>
        <end position="345"/>
    </location>
</feature>
<feature type="domain" description="Lon N-terminal" evidence="2">
    <location>
        <begin position="540"/>
        <end position="749"/>
    </location>
</feature>
<feature type="zinc finger region" description="RING-type 1" evidence="1">
    <location>
        <begin position="159"/>
        <end position="197"/>
    </location>
</feature>
<feature type="zinc finger region" description="RING-type 2" evidence="1">
    <location>
        <begin position="461"/>
        <end position="499"/>
    </location>
</feature>
<feature type="region of interest" description="Disordered" evidence="3">
    <location>
        <begin position="17"/>
        <end position="57"/>
    </location>
</feature>
<feature type="region of interest" description="Disordered" evidence="3">
    <location>
        <begin position="351"/>
        <end position="450"/>
    </location>
</feature>
<feature type="compositionally biased region" description="Low complexity" evidence="3">
    <location>
        <begin position="363"/>
        <end position="382"/>
    </location>
</feature>
<feature type="compositionally biased region" description="Basic and acidic residues" evidence="3">
    <location>
        <begin position="386"/>
        <end position="413"/>
    </location>
</feature>
<evidence type="ECO:0000255" key="1">
    <source>
        <dbReference type="PROSITE-ProRule" id="PRU00175"/>
    </source>
</evidence>
<evidence type="ECO:0000255" key="2">
    <source>
        <dbReference type="PROSITE-ProRule" id="PRU01123"/>
    </source>
</evidence>
<evidence type="ECO:0000256" key="3">
    <source>
        <dbReference type="SAM" id="MobiDB-lite"/>
    </source>
</evidence>
<sequence length="753" mass="83656">MDSLQTAQMVSLSAELGSNNLELAEPEEPGTSAAAGQSAAHPEEVTPEGSQALGAQEPEQSLPLAVPTPLECKVLLTQADALASEGHLREALEVYRQLSERQQLVAEQLEQLVRCLADSVPQEELASDSSGTSSCCAAALKEAGEAAAVAPEVWDGFKCKKCHGFLSDPVSLWCGHTFCKLCLERGRAADRRCALCGVKLSALMAASGRARGPRRAGQPAPLQLRVNVVLSGLLGKLFPGPARASQLRHEGNRLFREHQVEAALLKYNEAVRLAPNDHLLYSNRSQIYFTLESHEDALHDAEIACKLRPMGFKAHFRKAQALATLGKVKEALKEFLYCVSLDGKNKSARSEAQRENLELPHCSNQEGAAAAEESSSLANSAQGKVSSKEDRKKDQEGEDRDAASVRTGKCQEKKRNRCQIETQEDTELPNKVSKQDFPAEQGAKPDLSNPLGSFDASDLECSLCMRLFYEPVTTPCGHTFCLKCLERCLDHNAKCPLCKDVLLQCLPSRKYSKNVILEELIATFLPEEFKERKRLYEEEMEELSNLNKNVPIFVCTMAYPTVPCPLHIFEPCYRLMIRRCIETGTRQFGMCLGDPVKGFVEYGCILEIRNVQFFSDGRSVVDSIGKRRFKVLHQGQRDGYNTADIEYIEDQKVQGDDCAELMGLHNCVYEQASSWFHSLKASLKNRILNHFGPMPEKDEDPQVNPNGPAWCWWTLAVLPLESRAQLPFLAMRSLKDRLNGIRRILAFISRNQN</sequence>
<accession>Q9D4H7</accession>